<keyword id="KW-0001">2Fe-2S</keyword>
<keyword id="KW-0058">Aromatic hydrocarbons catabolism</keyword>
<keyword id="KW-0903">Direct protein sequencing</keyword>
<keyword id="KW-0249">Electron transport</keyword>
<keyword id="KW-0274">FAD</keyword>
<keyword id="KW-0285">Flavoprotein</keyword>
<keyword id="KW-0408">Iron</keyword>
<keyword id="KW-0411">Iron-sulfur</keyword>
<keyword id="KW-0479">Metal-binding</keyword>
<keyword id="KW-0503">Monooxygenase</keyword>
<keyword id="KW-0520">NAD</keyword>
<keyword id="KW-0560">Oxidoreductase</keyword>
<keyword id="KW-0614">Plasmid</keyword>
<keyword id="KW-0813">Transport</keyword>
<protein>
    <recommendedName>
        <fullName evidence="6">Phenol 2-monooxygenase, reductase component DmpP</fullName>
        <ecNumber evidence="4">1.14.13.244</ecNumber>
    </recommendedName>
    <alternativeName>
        <fullName>Phenol 2-monooxygenase P5 component</fullName>
    </alternativeName>
    <alternativeName>
        <fullName>Phenol hydroxylase P5 protein</fullName>
    </alternativeName>
</protein>
<organism>
    <name type="scientific">Pseudomonas sp. (strain CF600)</name>
    <dbReference type="NCBI Taxonomy" id="79676"/>
    <lineage>
        <taxon>Bacteria</taxon>
        <taxon>Pseudomonadati</taxon>
        <taxon>Pseudomonadota</taxon>
    </lineage>
</organism>
<gene>
    <name evidence="5" type="primary">dmpP</name>
</gene>
<accession>P19734</accession>
<comment type="function">
    <text evidence="3 4">Part of a multicomponent enzyme which catalyzes the degradation of phenol and some of its methylated derivatives (PubMed:2254259). DmpP probably transfers electrons from NADH, via FAD and the iron-sulfur center, to the oxygenase component of the complex (PubMed:2254259). Required for growth on phenol and for in vitro phenol hydroxylase activity (PubMed:2254258, PubMed:2254259).</text>
</comment>
<comment type="catalytic activity">
    <reaction evidence="4">
        <text>phenol + NADH + O2 + H(+) = catechol + NAD(+) + H2O</text>
        <dbReference type="Rhea" id="RHEA:57952"/>
        <dbReference type="ChEBI" id="CHEBI:15377"/>
        <dbReference type="ChEBI" id="CHEBI:15378"/>
        <dbReference type="ChEBI" id="CHEBI:15379"/>
        <dbReference type="ChEBI" id="CHEBI:15882"/>
        <dbReference type="ChEBI" id="CHEBI:18135"/>
        <dbReference type="ChEBI" id="CHEBI:57540"/>
        <dbReference type="ChEBI" id="CHEBI:57945"/>
        <dbReference type="EC" id="1.14.13.244"/>
    </reaction>
    <physiologicalReaction direction="left-to-right" evidence="4">
        <dbReference type="Rhea" id="RHEA:57953"/>
    </physiologicalReaction>
</comment>
<comment type="cofactor">
    <cofactor evidence="4">
        <name>FAD</name>
        <dbReference type="ChEBI" id="CHEBI:57692"/>
    </cofactor>
    <text evidence="4">Binds 1 FAD per subunit.</text>
</comment>
<comment type="cofactor">
    <cofactor evidence="4">
        <name>[2Fe-2S] cluster</name>
        <dbReference type="ChEBI" id="CHEBI:190135"/>
    </cofactor>
    <text evidence="4">Binds 1 [2Fe-2S] cluster per subunit.</text>
</comment>
<comment type="pathway">
    <text evidence="3">Aromatic compound metabolism; phenol degradation.</text>
</comment>
<comment type="subunit">
    <text evidence="4">The multicomponent enzyme phenol hydroxylase is formed by DmpL (P1 component), DmpM (P2 component), DmpN (P3 component), DmpO (P4 component) and DmpP (P5 component).</text>
</comment>
<comment type="disruption phenotype">
    <text evidence="3">Cells lacking this gene cannot grow on phenol.</text>
</comment>
<proteinExistence type="evidence at protein level"/>
<dbReference type="EC" id="1.14.13.244" evidence="4"/>
<dbReference type="EMBL" id="M60276">
    <property type="protein sequence ID" value="AAA25944.1"/>
    <property type="molecule type" value="Genomic_DNA"/>
</dbReference>
<dbReference type="SMR" id="P19734"/>
<dbReference type="BioCyc" id="MetaCyc:MONOMER-12799"/>
<dbReference type="BRENDA" id="1.14.13.244">
    <property type="organism ID" value="16277"/>
</dbReference>
<dbReference type="UniPathway" id="UPA00728"/>
<dbReference type="GO" id="GO:0005727">
    <property type="term" value="C:extrachromosomal circular DNA"/>
    <property type="evidence" value="ECO:0000314"/>
    <property type="project" value="UniProtKB"/>
</dbReference>
<dbReference type="GO" id="GO:0051537">
    <property type="term" value="F:2 iron, 2 sulfur cluster binding"/>
    <property type="evidence" value="ECO:0007669"/>
    <property type="project" value="UniProtKB-KW"/>
</dbReference>
<dbReference type="GO" id="GO:0046872">
    <property type="term" value="F:metal ion binding"/>
    <property type="evidence" value="ECO:0007669"/>
    <property type="project" value="UniProtKB-KW"/>
</dbReference>
<dbReference type="GO" id="GO:0018662">
    <property type="term" value="F:phenol 2-monooxygenase activity"/>
    <property type="evidence" value="ECO:0000314"/>
    <property type="project" value="UniProtKB"/>
</dbReference>
<dbReference type="GO" id="GO:0046191">
    <property type="term" value="P:aerobic phenol-containing compound catabolic process"/>
    <property type="evidence" value="ECO:0000314"/>
    <property type="project" value="UniProtKB"/>
</dbReference>
<dbReference type="CDD" id="cd00207">
    <property type="entry name" value="fer2"/>
    <property type="match status" value="1"/>
</dbReference>
<dbReference type="CDD" id="cd06211">
    <property type="entry name" value="phenol_2-monooxygenase_like"/>
    <property type="match status" value="1"/>
</dbReference>
<dbReference type="Gene3D" id="3.10.20.30">
    <property type="match status" value="1"/>
</dbReference>
<dbReference type="Gene3D" id="3.40.50.80">
    <property type="entry name" value="Nucleotide-binding domain of ferredoxin-NADP reductase (FNR) module"/>
    <property type="match status" value="1"/>
</dbReference>
<dbReference type="Gene3D" id="2.40.30.10">
    <property type="entry name" value="Translation factors"/>
    <property type="match status" value="1"/>
</dbReference>
<dbReference type="InterPro" id="IPR036010">
    <property type="entry name" value="2Fe-2S_ferredoxin-like_sf"/>
</dbReference>
<dbReference type="InterPro" id="IPR001041">
    <property type="entry name" value="2Fe-2S_ferredoxin-type"/>
</dbReference>
<dbReference type="InterPro" id="IPR006058">
    <property type="entry name" value="2Fe2S_fd_BS"/>
</dbReference>
<dbReference type="InterPro" id="IPR012675">
    <property type="entry name" value="Beta-grasp_dom_sf"/>
</dbReference>
<dbReference type="InterPro" id="IPR008333">
    <property type="entry name" value="Cbr1-like_FAD-bd_dom"/>
</dbReference>
<dbReference type="InterPro" id="IPR017927">
    <property type="entry name" value="FAD-bd_FR_type"/>
</dbReference>
<dbReference type="InterPro" id="IPR039261">
    <property type="entry name" value="FNR_nucleotide-bd"/>
</dbReference>
<dbReference type="InterPro" id="IPR001433">
    <property type="entry name" value="OxRdtase_FAD/NAD-bd"/>
</dbReference>
<dbReference type="InterPro" id="IPR017938">
    <property type="entry name" value="Riboflavin_synthase-like_b-brl"/>
</dbReference>
<dbReference type="PANTHER" id="PTHR43644">
    <property type="entry name" value="NA(+)-TRANSLOCATING NADH-QUINONE REDUCTASE SUBUNIT"/>
    <property type="match status" value="1"/>
</dbReference>
<dbReference type="PANTHER" id="PTHR43644:SF1">
    <property type="entry name" value="NAD(P)H-FLAVIN REDUCTASE"/>
    <property type="match status" value="1"/>
</dbReference>
<dbReference type="Pfam" id="PF00970">
    <property type="entry name" value="FAD_binding_6"/>
    <property type="match status" value="1"/>
</dbReference>
<dbReference type="Pfam" id="PF00111">
    <property type="entry name" value="Fer2"/>
    <property type="match status" value="1"/>
</dbReference>
<dbReference type="Pfam" id="PF00175">
    <property type="entry name" value="NAD_binding_1"/>
    <property type="match status" value="1"/>
</dbReference>
<dbReference type="PRINTS" id="PR00410">
    <property type="entry name" value="PHEHYDRXLASE"/>
</dbReference>
<dbReference type="SUPFAM" id="SSF54292">
    <property type="entry name" value="2Fe-2S ferredoxin-like"/>
    <property type="match status" value="1"/>
</dbReference>
<dbReference type="SUPFAM" id="SSF52343">
    <property type="entry name" value="Ferredoxin reductase-like, C-terminal NADP-linked domain"/>
    <property type="match status" value="1"/>
</dbReference>
<dbReference type="SUPFAM" id="SSF63380">
    <property type="entry name" value="Riboflavin synthase domain-like"/>
    <property type="match status" value="1"/>
</dbReference>
<dbReference type="PROSITE" id="PS00197">
    <property type="entry name" value="2FE2S_FER_1"/>
    <property type="match status" value="1"/>
</dbReference>
<dbReference type="PROSITE" id="PS51085">
    <property type="entry name" value="2FE2S_FER_2"/>
    <property type="match status" value="1"/>
</dbReference>
<dbReference type="PROSITE" id="PS51384">
    <property type="entry name" value="FAD_FR"/>
    <property type="match status" value="1"/>
</dbReference>
<name>DMPP_PSEUF</name>
<geneLocation type="plasmid">
    <name>pVI150</name>
</geneLocation>
<evidence type="ECO:0000255" key="1">
    <source>
        <dbReference type="PROSITE-ProRule" id="PRU00465"/>
    </source>
</evidence>
<evidence type="ECO:0000255" key="2">
    <source>
        <dbReference type="PROSITE-ProRule" id="PRU00716"/>
    </source>
</evidence>
<evidence type="ECO:0000269" key="3">
    <source>
    </source>
</evidence>
<evidence type="ECO:0000269" key="4">
    <source>
    </source>
</evidence>
<evidence type="ECO:0000303" key="5">
    <source>
    </source>
</evidence>
<evidence type="ECO:0000305" key="6"/>
<sequence>MSYNVTIEPTGEVIEVEDGQTILQAALRQGVWLPFACGHGTCATCKVQVVEGEVDIGEASPFALMDIERDERKVLACCAIPLSDLVIEADVDADPDFLGHPVEDYRGVVSALVDLSPTIKGLHIKLDRPMPFQAGQYVNLALPGIDGTRAFSLANPPSRNDEVELHVRLVEGGAATGFIHKQLKVGDAVELSGPYGQFFVRDSQAGDLIFIAGGSGLSSPQSMILDLLERGDTRRITLFQGARNRAELYNCELFEELAARHPNFSYVPALNQANDDPEWQGFKGFVHDAAKAHFDGRFGGQKAYLCGPPPMIDAAITTLMQGRLFERDIFMERFYTAADGAGESSRSALFKRI</sequence>
<feature type="initiator methionine" description="Removed" evidence="4">
    <location>
        <position position="1"/>
    </location>
</feature>
<feature type="chain" id="PRO_0000189407" description="Phenol 2-monooxygenase, reductase component DmpP">
    <location>
        <begin position="2"/>
        <end position="353"/>
    </location>
</feature>
<feature type="domain" description="2Fe-2S ferredoxin-type" evidence="1">
    <location>
        <begin position="3"/>
        <end position="93"/>
    </location>
</feature>
<feature type="domain" description="FAD-binding FR-type" evidence="2">
    <location>
        <begin position="102"/>
        <end position="201"/>
    </location>
</feature>
<feature type="binding site" evidence="1">
    <location>
        <position position="37"/>
    </location>
    <ligand>
        <name>[2Fe-2S] cluster</name>
        <dbReference type="ChEBI" id="CHEBI:190135"/>
    </ligand>
</feature>
<feature type="binding site" evidence="1">
    <location>
        <position position="42"/>
    </location>
    <ligand>
        <name>[2Fe-2S] cluster</name>
        <dbReference type="ChEBI" id="CHEBI:190135"/>
    </ligand>
</feature>
<feature type="binding site" evidence="1">
    <location>
        <position position="45"/>
    </location>
    <ligand>
        <name>[2Fe-2S] cluster</name>
        <dbReference type="ChEBI" id="CHEBI:190135"/>
    </ligand>
</feature>
<feature type="binding site" evidence="1">
    <location>
        <position position="77"/>
    </location>
    <ligand>
        <name>[2Fe-2S] cluster</name>
        <dbReference type="ChEBI" id="CHEBI:190135"/>
    </ligand>
</feature>
<reference key="1">
    <citation type="journal article" date="1990" name="J. Bacteriol.">
        <title>Complete nucleotide sequence and polypeptide analysis of multicomponent phenol hydroxylase from Pseudomonas sp. strain CF600.</title>
        <authorList>
            <person name="Nordlund I."/>
            <person name="Powlowski J."/>
            <person name="Shingler V."/>
        </authorList>
    </citation>
    <scope>NUCLEOTIDE SEQUENCE [GENOMIC DNA]</scope>
    <scope>FUNCTION</scope>
    <scope>PATHWAY</scope>
    <scope>DISRUPTION PHENOTYPE</scope>
    <source>
        <strain>CF600</strain>
    </source>
</reference>
<reference key="2">
    <citation type="journal article" date="1990" name="J. Bacteriol.">
        <title>In vitro analysis of polypeptide requirements of multicomponent phenol hydroxylase from Pseudomonas sp. strain CF600.</title>
        <authorList>
            <person name="Powlowski J."/>
            <person name="Shingler V."/>
        </authorList>
    </citation>
    <scope>PROTEIN SEQUENCE OF 2-5</scope>
    <scope>FUNCTION</scope>
    <scope>CATALYTIC ACTIVITY</scope>
    <scope>COFACTOR</scope>
    <scope>SUBUNIT</scope>
    <source>
        <strain>CF600</strain>
    </source>
</reference>